<keyword id="KW-0285">Flavoprotein</keyword>
<keyword id="KW-0288">FMN</keyword>
<keyword id="KW-0560">Oxidoreductase</keyword>
<keyword id="KW-0664">Pyridoxine biosynthesis</keyword>
<keyword id="KW-1185">Reference proteome</keyword>
<organism>
    <name type="scientific">Leptospira biflexa serovar Patoc (strain Patoc 1 / ATCC 23582 / Paris)</name>
    <dbReference type="NCBI Taxonomy" id="456481"/>
    <lineage>
        <taxon>Bacteria</taxon>
        <taxon>Pseudomonadati</taxon>
        <taxon>Spirochaetota</taxon>
        <taxon>Spirochaetia</taxon>
        <taxon>Leptospirales</taxon>
        <taxon>Leptospiraceae</taxon>
        <taxon>Leptospira</taxon>
    </lineage>
</organism>
<name>PDXH_LEPBP</name>
<evidence type="ECO:0000255" key="1">
    <source>
        <dbReference type="HAMAP-Rule" id="MF_01629"/>
    </source>
</evidence>
<proteinExistence type="inferred from homology"/>
<gene>
    <name evidence="1" type="primary">pdxH</name>
    <name type="ordered locus">LEPBI_I1407</name>
</gene>
<reference key="1">
    <citation type="journal article" date="2008" name="PLoS ONE">
        <title>Genome sequence of the saprophyte Leptospira biflexa provides insights into the evolution of Leptospira and the pathogenesis of leptospirosis.</title>
        <authorList>
            <person name="Picardeau M."/>
            <person name="Bulach D.M."/>
            <person name="Bouchier C."/>
            <person name="Zuerner R.L."/>
            <person name="Zidane N."/>
            <person name="Wilson P.J."/>
            <person name="Creno S."/>
            <person name="Kuczek E.S."/>
            <person name="Bommezzadri S."/>
            <person name="Davis J.C."/>
            <person name="McGrath A."/>
            <person name="Johnson M.J."/>
            <person name="Boursaux-Eude C."/>
            <person name="Seemann T."/>
            <person name="Rouy Z."/>
            <person name="Coppel R.L."/>
            <person name="Rood J.I."/>
            <person name="Lajus A."/>
            <person name="Davies J.K."/>
            <person name="Medigue C."/>
            <person name="Adler B."/>
        </authorList>
    </citation>
    <scope>NUCLEOTIDE SEQUENCE [LARGE SCALE GENOMIC DNA]</scope>
    <source>
        <strain>Patoc 1 / ATCC 23582 / Paris</strain>
    </source>
</reference>
<comment type="function">
    <text evidence="1">Catalyzes the oxidation of either pyridoxine 5'-phosphate (PNP) or pyridoxamine 5'-phosphate (PMP) into pyridoxal 5'-phosphate (PLP).</text>
</comment>
<comment type="catalytic activity">
    <reaction evidence="1">
        <text>pyridoxamine 5'-phosphate + O2 + H2O = pyridoxal 5'-phosphate + H2O2 + NH4(+)</text>
        <dbReference type="Rhea" id="RHEA:15817"/>
        <dbReference type="ChEBI" id="CHEBI:15377"/>
        <dbReference type="ChEBI" id="CHEBI:15379"/>
        <dbReference type="ChEBI" id="CHEBI:16240"/>
        <dbReference type="ChEBI" id="CHEBI:28938"/>
        <dbReference type="ChEBI" id="CHEBI:58451"/>
        <dbReference type="ChEBI" id="CHEBI:597326"/>
        <dbReference type="EC" id="1.4.3.5"/>
    </reaction>
</comment>
<comment type="catalytic activity">
    <reaction evidence="1">
        <text>pyridoxine 5'-phosphate + O2 = pyridoxal 5'-phosphate + H2O2</text>
        <dbReference type="Rhea" id="RHEA:15149"/>
        <dbReference type="ChEBI" id="CHEBI:15379"/>
        <dbReference type="ChEBI" id="CHEBI:16240"/>
        <dbReference type="ChEBI" id="CHEBI:58589"/>
        <dbReference type="ChEBI" id="CHEBI:597326"/>
        <dbReference type="EC" id="1.4.3.5"/>
    </reaction>
</comment>
<comment type="cofactor">
    <cofactor evidence="1">
        <name>FMN</name>
        <dbReference type="ChEBI" id="CHEBI:58210"/>
    </cofactor>
    <text evidence="1">Binds 1 FMN per subunit.</text>
</comment>
<comment type="pathway">
    <text evidence="1">Cofactor metabolism; pyridoxal 5'-phosphate salvage; pyridoxal 5'-phosphate from pyridoxamine 5'-phosphate: step 1/1.</text>
</comment>
<comment type="pathway">
    <text evidence="1">Cofactor metabolism; pyridoxal 5'-phosphate salvage; pyridoxal 5'-phosphate from pyridoxine 5'-phosphate: step 1/1.</text>
</comment>
<comment type="subunit">
    <text evidence="1">Homodimer.</text>
</comment>
<comment type="similarity">
    <text evidence="1">Belongs to the pyridoxamine 5'-phosphate oxidase family.</text>
</comment>
<dbReference type="EC" id="1.4.3.5" evidence="1"/>
<dbReference type="EMBL" id="CP000786">
    <property type="protein sequence ID" value="ABZ97516.1"/>
    <property type="molecule type" value="Genomic_DNA"/>
</dbReference>
<dbReference type="SMR" id="B0SPV0"/>
<dbReference type="STRING" id="456481.LEPBI_I1407"/>
<dbReference type="KEGG" id="lbi:LEPBI_I1407"/>
<dbReference type="HOGENOM" id="CLU_032263_2_2_12"/>
<dbReference type="OrthoDB" id="9780392at2"/>
<dbReference type="BioCyc" id="LBIF456481:LEPBI_RS06900-MONOMER"/>
<dbReference type="UniPathway" id="UPA01068">
    <property type="reaction ID" value="UER00304"/>
</dbReference>
<dbReference type="UniPathway" id="UPA01068">
    <property type="reaction ID" value="UER00305"/>
</dbReference>
<dbReference type="Proteomes" id="UP000001847">
    <property type="component" value="Chromosome I"/>
</dbReference>
<dbReference type="GO" id="GO:0010181">
    <property type="term" value="F:FMN binding"/>
    <property type="evidence" value="ECO:0007669"/>
    <property type="project" value="UniProtKB-UniRule"/>
</dbReference>
<dbReference type="GO" id="GO:0004733">
    <property type="term" value="F:pyridoxamine phosphate oxidase activity"/>
    <property type="evidence" value="ECO:0007669"/>
    <property type="project" value="UniProtKB-UniRule"/>
</dbReference>
<dbReference type="GO" id="GO:0008615">
    <property type="term" value="P:pyridoxine biosynthetic process"/>
    <property type="evidence" value="ECO:0007669"/>
    <property type="project" value="UniProtKB-KW"/>
</dbReference>
<dbReference type="FunFam" id="2.30.110.10:FF:000020">
    <property type="entry name" value="PNPO isoform 11"/>
    <property type="match status" value="1"/>
</dbReference>
<dbReference type="Gene3D" id="2.30.110.10">
    <property type="entry name" value="Electron Transport, Fmn-binding Protein, Chain A"/>
    <property type="match status" value="1"/>
</dbReference>
<dbReference type="HAMAP" id="MF_01629">
    <property type="entry name" value="PdxH"/>
    <property type="match status" value="1"/>
</dbReference>
<dbReference type="InterPro" id="IPR000659">
    <property type="entry name" value="Pyridox_Oxase"/>
</dbReference>
<dbReference type="InterPro" id="IPR019740">
    <property type="entry name" value="Pyridox_Oxase_CS"/>
</dbReference>
<dbReference type="InterPro" id="IPR011576">
    <property type="entry name" value="Pyridox_Oxase_N"/>
</dbReference>
<dbReference type="InterPro" id="IPR019576">
    <property type="entry name" value="Pyridoxamine_oxidase_dimer_C"/>
</dbReference>
<dbReference type="InterPro" id="IPR012349">
    <property type="entry name" value="Split_barrel_FMN-bd"/>
</dbReference>
<dbReference type="NCBIfam" id="TIGR00558">
    <property type="entry name" value="pdxH"/>
    <property type="match status" value="1"/>
</dbReference>
<dbReference type="NCBIfam" id="NF004231">
    <property type="entry name" value="PRK05679.1"/>
    <property type="match status" value="1"/>
</dbReference>
<dbReference type="PANTHER" id="PTHR10851:SF0">
    <property type="entry name" value="PYRIDOXINE-5'-PHOSPHATE OXIDASE"/>
    <property type="match status" value="1"/>
</dbReference>
<dbReference type="PANTHER" id="PTHR10851">
    <property type="entry name" value="PYRIDOXINE-5-PHOSPHATE OXIDASE"/>
    <property type="match status" value="1"/>
</dbReference>
<dbReference type="Pfam" id="PF10590">
    <property type="entry name" value="PNP_phzG_C"/>
    <property type="match status" value="1"/>
</dbReference>
<dbReference type="Pfam" id="PF01243">
    <property type="entry name" value="PNPOx_N"/>
    <property type="match status" value="1"/>
</dbReference>
<dbReference type="PIRSF" id="PIRSF000190">
    <property type="entry name" value="Pyd_amn-ph_oxd"/>
    <property type="match status" value="1"/>
</dbReference>
<dbReference type="SUPFAM" id="SSF50475">
    <property type="entry name" value="FMN-binding split barrel"/>
    <property type="match status" value="1"/>
</dbReference>
<dbReference type="PROSITE" id="PS01064">
    <property type="entry name" value="PYRIDOX_OXIDASE"/>
    <property type="match status" value="1"/>
</dbReference>
<protein>
    <recommendedName>
        <fullName evidence="1">Pyridoxine/pyridoxamine 5'-phosphate oxidase</fullName>
        <ecNumber evidence="1">1.4.3.5</ecNumber>
    </recommendedName>
    <alternativeName>
        <fullName evidence="1">PNP/PMP oxidase</fullName>
        <shortName evidence="1">PNPOx</shortName>
    </alternativeName>
    <alternativeName>
        <fullName evidence="1">Pyridoxal 5'-phosphate synthase</fullName>
    </alternativeName>
</protein>
<accession>B0SPV0</accession>
<feature type="chain" id="PRO_1000186317" description="Pyridoxine/pyridoxamine 5'-phosphate oxidase">
    <location>
        <begin position="1"/>
        <end position="212"/>
    </location>
</feature>
<feature type="binding site" evidence="1">
    <location>
        <begin position="8"/>
        <end position="11"/>
    </location>
    <ligand>
        <name>substrate</name>
    </ligand>
</feature>
<feature type="binding site" evidence="1">
    <location>
        <begin position="61"/>
        <end position="66"/>
    </location>
    <ligand>
        <name>FMN</name>
        <dbReference type="ChEBI" id="CHEBI:58210"/>
    </ligand>
</feature>
<feature type="binding site" evidence="1">
    <location>
        <position position="66"/>
    </location>
    <ligand>
        <name>substrate</name>
    </ligand>
</feature>
<feature type="binding site" evidence="1">
    <location>
        <begin position="76"/>
        <end position="77"/>
    </location>
    <ligand>
        <name>FMN</name>
        <dbReference type="ChEBI" id="CHEBI:58210"/>
    </ligand>
</feature>
<feature type="binding site" evidence="1">
    <location>
        <position position="83"/>
    </location>
    <ligand>
        <name>FMN</name>
        <dbReference type="ChEBI" id="CHEBI:58210"/>
    </ligand>
</feature>
<feature type="binding site" evidence="1">
    <location>
        <position position="105"/>
    </location>
    <ligand>
        <name>FMN</name>
        <dbReference type="ChEBI" id="CHEBI:58210"/>
    </ligand>
</feature>
<feature type="binding site" evidence="1">
    <location>
        <position position="123"/>
    </location>
    <ligand>
        <name>substrate</name>
    </ligand>
</feature>
<feature type="binding site" evidence="1">
    <location>
        <position position="127"/>
    </location>
    <ligand>
        <name>substrate</name>
    </ligand>
</feature>
<feature type="binding site" evidence="1">
    <location>
        <position position="131"/>
    </location>
    <ligand>
        <name>substrate</name>
    </ligand>
</feature>
<feature type="binding site" evidence="1">
    <location>
        <begin position="140"/>
        <end position="141"/>
    </location>
    <ligand>
        <name>FMN</name>
        <dbReference type="ChEBI" id="CHEBI:58210"/>
    </ligand>
</feature>
<feature type="binding site" evidence="1">
    <location>
        <position position="185"/>
    </location>
    <ligand>
        <name>FMN</name>
        <dbReference type="ChEBI" id="CHEBI:58210"/>
    </ligand>
</feature>
<feature type="binding site" evidence="1">
    <location>
        <begin position="191"/>
        <end position="193"/>
    </location>
    <ligand>
        <name>substrate</name>
    </ligand>
</feature>
<feature type="binding site" evidence="1">
    <location>
        <position position="195"/>
    </location>
    <ligand>
        <name>FMN</name>
        <dbReference type="ChEBI" id="CHEBI:58210"/>
    </ligand>
</feature>
<sequence length="212" mass="24621">MNDLAHMRTNYVRSVLSEETAGFDPLALFSLWFSEAKEEGELEPNAMSLSTVNTDGKPSVRIVLLKGLIRNEFQFFTNYSSHKGKDIEQNRNVALTFFWPKMERQIRIEGTVTKIPKEESEAYFKIRPRESQLGALTSNQSSVVVSREELETKFQTLEKEWEGKEIPMPESWGGYSVSPNKIEFWQGRAGRLHDRIVFERKNENWIRSRLSP</sequence>